<comment type="function">
    <text evidence="1">Part of the twin-arginine translocation (Tat) system that transports large folded proteins containing a characteristic twin-arginine motif in their signal peptide across membranes. TatA could form the protein-conducting channel of the Tat system.</text>
</comment>
<comment type="subunit">
    <text evidence="1">Forms a complex with TatC.</text>
</comment>
<comment type="subcellular location">
    <subcellularLocation>
        <location evidence="1">Cell inner membrane</location>
        <topology evidence="1">Single-pass membrane protein</topology>
    </subcellularLocation>
</comment>
<comment type="similarity">
    <text evidence="1">Belongs to the TatA/E family.</text>
</comment>
<keyword id="KW-0997">Cell inner membrane</keyword>
<keyword id="KW-1003">Cell membrane</keyword>
<keyword id="KW-0472">Membrane</keyword>
<keyword id="KW-0653">Protein transport</keyword>
<keyword id="KW-1185">Reference proteome</keyword>
<keyword id="KW-0811">Translocation</keyword>
<keyword id="KW-0812">Transmembrane</keyword>
<keyword id="KW-1133">Transmembrane helix</keyword>
<keyword id="KW-0813">Transport</keyword>
<name>TATA_PROM0</name>
<organism>
    <name type="scientific">Prochlorococcus marinus (strain MIT 9301)</name>
    <dbReference type="NCBI Taxonomy" id="167546"/>
    <lineage>
        <taxon>Bacteria</taxon>
        <taxon>Bacillati</taxon>
        <taxon>Cyanobacteriota</taxon>
        <taxon>Cyanophyceae</taxon>
        <taxon>Synechococcales</taxon>
        <taxon>Prochlorococcaceae</taxon>
        <taxon>Prochlorococcus</taxon>
    </lineage>
</organism>
<accession>A3PB74</accession>
<reference key="1">
    <citation type="journal article" date="2007" name="PLoS Genet.">
        <title>Patterns and implications of gene gain and loss in the evolution of Prochlorococcus.</title>
        <authorList>
            <person name="Kettler G.C."/>
            <person name="Martiny A.C."/>
            <person name="Huang K."/>
            <person name="Zucker J."/>
            <person name="Coleman M.L."/>
            <person name="Rodrigue S."/>
            <person name="Chen F."/>
            <person name="Lapidus A."/>
            <person name="Ferriera S."/>
            <person name="Johnson J."/>
            <person name="Steglich C."/>
            <person name="Church G.M."/>
            <person name="Richardson P."/>
            <person name="Chisholm S.W."/>
        </authorList>
    </citation>
    <scope>NUCLEOTIDE SEQUENCE [LARGE SCALE GENOMIC DNA]</scope>
    <source>
        <strain>MIT 9301</strain>
    </source>
</reference>
<dbReference type="EMBL" id="CP000576">
    <property type="protein sequence ID" value="ABO16999.1"/>
    <property type="molecule type" value="Genomic_DNA"/>
</dbReference>
<dbReference type="RefSeq" id="WP_011862382.1">
    <property type="nucleotide sequence ID" value="NC_009091.1"/>
</dbReference>
<dbReference type="SMR" id="A3PB74"/>
<dbReference type="STRING" id="167546.P9301_03761"/>
<dbReference type="KEGG" id="pmg:P9301_03761"/>
<dbReference type="eggNOG" id="COG1826">
    <property type="taxonomic scope" value="Bacteria"/>
</dbReference>
<dbReference type="HOGENOM" id="CLU_086034_1_5_3"/>
<dbReference type="OrthoDB" id="9800908at2"/>
<dbReference type="Proteomes" id="UP000001430">
    <property type="component" value="Chromosome"/>
</dbReference>
<dbReference type="GO" id="GO:0033281">
    <property type="term" value="C:TAT protein transport complex"/>
    <property type="evidence" value="ECO:0007669"/>
    <property type="project" value="UniProtKB-UniRule"/>
</dbReference>
<dbReference type="GO" id="GO:0008320">
    <property type="term" value="F:protein transmembrane transporter activity"/>
    <property type="evidence" value="ECO:0007669"/>
    <property type="project" value="UniProtKB-UniRule"/>
</dbReference>
<dbReference type="GO" id="GO:0043953">
    <property type="term" value="P:protein transport by the Tat complex"/>
    <property type="evidence" value="ECO:0007669"/>
    <property type="project" value="UniProtKB-UniRule"/>
</dbReference>
<dbReference type="Gene3D" id="1.20.5.3310">
    <property type="match status" value="1"/>
</dbReference>
<dbReference type="HAMAP" id="MF_00236">
    <property type="entry name" value="TatA_E"/>
    <property type="match status" value="1"/>
</dbReference>
<dbReference type="InterPro" id="IPR003369">
    <property type="entry name" value="TatA/B/E"/>
</dbReference>
<dbReference type="InterPro" id="IPR006312">
    <property type="entry name" value="TatA/E"/>
</dbReference>
<dbReference type="NCBIfam" id="NF011429">
    <property type="entry name" value="PRK14857.1"/>
    <property type="match status" value="1"/>
</dbReference>
<dbReference type="NCBIfam" id="NF011430">
    <property type="entry name" value="PRK14861.1"/>
    <property type="match status" value="1"/>
</dbReference>
<dbReference type="NCBIfam" id="TIGR01411">
    <property type="entry name" value="tatAE"/>
    <property type="match status" value="1"/>
</dbReference>
<dbReference type="PANTHER" id="PTHR33162">
    <property type="entry name" value="SEC-INDEPENDENT PROTEIN TRANSLOCASE PROTEIN TATA, CHLOROPLASTIC"/>
    <property type="match status" value="1"/>
</dbReference>
<dbReference type="PANTHER" id="PTHR33162:SF1">
    <property type="entry name" value="SEC-INDEPENDENT PROTEIN TRANSLOCASE PROTEIN TATA, CHLOROPLASTIC"/>
    <property type="match status" value="1"/>
</dbReference>
<dbReference type="Pfam" id="PF02416">
    <property type="entry name" value="TatA_B_E"/>
    <property type="match status" value="1"/>
</dbReference>
<dbReference type="PRINTS" id="PR01506">
    <property type="entry name" value="TATBPROTEIN"/>
</dbReference>
<feature type="chain" id="PRO_0000336637" description="Sec-independent protein translocase protein TatA">
    <location>
        <begin position="1"/>
        <end position="88"/>
    </location>
</feature>
<feature type="transmembrane region" description="Helical" evidence="1">
    <location>
        <begin position="3"/>
        <end position="23"/>
    </location>
</feature>
<feature type="region of interest" description="Disordered" evidence="2">
    <location>
        <begin position="56"/>
        <end position="88"/>
    </location>
</feature>
<feature type="compositionally biased region" description="Basic and acidic residues" evidence="2">
    <location>
        <begin position="56"/>
        <end position="66"/>
    </location>
</feature>
<feature type="compositionally biased region" description="Polar residues" evidence="2">
    <location>
        <begin position="67"/>
        <end position="76"/>
    </location>
</feature>
<feature type="compositionally biased region" description="Basic and acidic residues" evidence="2">
    <location>
        <begin position="77"/>
        <end position="88"/>
    </location>
</feature>
<proteinExistence type="inferred from homology"/>
<evidence type="ECO:0000255" key="1">
    <source>
        <dbReference type="HAMAP-Rule" id="MF_00236"/>
    </source>
</evidence>
<evidence type="ECO:0000256" key="2">
    <source>
        <dbReference type="SAM" id="MobiDB-lite"/>
    </source>
</evidence>
<protein>
    <recommendedName>
        <fullName evidence="1">Sec-independent protein translocase protein TatA</fullName>
    </recommendedName>
</protein>
<sequence>MNIFGVGLPEVTVILILALLIFGPKKLPELGKQLGKTLKSLKKASNEFQNEIDQVMKEEDKDESPKSIESNQSNEINQEKIDSENSNN</sequence>
<gene>
    <name evidence="1" type="primary">tatA</name>
    <name type="ordered locus">P9301_03761</name>
</gene>